<name>LYSZ_CENSY</name>
<accession>A0RWW1</accession>
<evidence type="ECO:0000255" key="1">
    <source>
        <dbReference type="HAMAP-Rule" id="MF_02082"/>
    </source>
</evidence>
<feature type="chain" id="PRO_1000075307" description="Putative [LysW]-aminoadipate/[LysW]-glutamate kinase">
    <location>
        <begin position="1"/>
        <end position="266"/>
    </location>
</feature>
<feature type="binding site" evidence="1">
    <location>
        <begin position="36"/>
        <end position="37"/>
    </location>
    <ligand>
        <name>substrate</name>
    </ligand>
</feature>
<feature type="binding site" evidence="1">
    <location>
        <position position="63"/>
    </location>
    <ligand>
        <name>substrate</name>
    </ligand>
</feature>
<feature type="binding site" evidence="1">
    <location>
        <position position="168"/>
    </location>
    <ligand>
        <name>substrate</name>
    </ligand>
</feature>
<feature type="site" description="Transition state stabilizer" evidence="1">
    <location>
        <position position="5"/>
    </location>
</feature>
<feature type="site" description="Transition state stabilizer" evidence="1">
    <location>
        <position position="225"/>
    </location>
</feature>
<organism>
    <name type="scientific">Cenarchaeum symbiosum (strain A)</name>
    <dbReference type="NCBI Taxonomy" id="414004"/>
    <lineage>
        <taxon>Archaea</taxon>
        <taxon>Nitrososphaerota</taxon>
        <taxon>Candidatus Cenarchaeales</taxon>
        <taxon>Candidatus Cenarchaeaceae</taxon>
        <taxon>Candidatus Cenarchaeum</taxon>
    </lineage>
</organism>
<sequence>MITIKIGGSIVDSLHPSAIPDIKKAAAGGVVLVHGGGKEVTKVCEQLGKEPRFVTSPGNIKSRYTDKETAEIFTMVMSGRINKCIVRMLQQHGVNAVGLSGIDGGLIRAERKSRLVIVNERGRKQAIEGGYTGRITSVNSELLETLLGKGIVPVVSPIAMGNEYELLNVDGDRAAANIAGATKSERILFVTDVDGLMMDEKLVSRLSAAEAEEIRPKIGPGMEKKVLAATEALKMGVREAIIARGSRENPVSAAIAHENCTVIGDG</sequence>
<proteinExistence type="inferred from homology"/>
<protein>
    <recommendedName>
        <fullName evidence="1">Putative [LysW]-aminoadipate/[LysW]-glutamate kinase</fullName>
        <ecNumber evidence="1">2.7.2.17</ecNumber>
        <ecNumber evidence="1">2.7.2.19</ecNumber>
    </recommendedName>
</protein>
<gene>
    <name evidence="1" type="primary">lysZ</name>
    <name type="ordered locus">CENSYa_1204</name>
</gene>
<keyword id="KW-0028">Amino-acid biosynthesis</keyword>
<keyword id="KW-0055">Arginine biosynthesis</keyword>
<keyword id="KW-0067">ATP-binding</keyword>
<keyword id="KW-0963">Cytoplasm</keyword>
<keyword id="KW-0418">Kinase</keyword>
<keyword id="KW-0457">Lysine biosynthesis</keyword>
<keyword id="KW-0547">Nucleotide-binding</keyword>
<keyword id="KW-1185">Reference proteome</keyword>
<keyword id="KW-0808">Transferase</keyword>
<comment type="function">
    <text evidence="1">Involved in both the arginine and lysine biosynthetic pathways. Phosphorylates the LysW-bound precursors glutamate (for arginine biosynthesis), respectively alpha-aminoadipate (for lysine biosynthesis).</text>
</comment>
<comment type="catalytic activity">
    <reaction evidence="1">
        <text>[amino-group carrier protein]-C-terminal-N-(1,4-dicarboxybutan-1-yl)-L-glutamine + ATP = [amino-group carrier protein]-C-terminal-N-(1-carboxy-5-phosphooxy-5-oxopentan-1-yl)-L-glutamine + ADP</text>
        <dbReference type="Rhea" id="RHEA:41944"/>
        <dbReference type="Rhea" id="RHEA-COMP:9694"/>
        <dbReference type="Rhea" id="RHEA-COMP:9712"/>
        <dbReference type="ChEBI" id="CHEBI:30616"/>
        <dbReference type="ChEBI" id="CHEBI:78499"/>
        <dbReference type="ChEBI" id="CHEBI:78503"/>
        <dbReference type="ChEBI" id="CHEBI:456216"/>
        <dbReference type="EC" id="2.7.2.17"/>
    </reaction>
</comment>
<comment type="catalytic activity">
    <reaction evidence="1">
        <text>[amino-group carrier protein]-C-terminal-gamma-(L-glutamyl)-L-glutamate + ATP = [amino-group carrier protein]-C-terminal-gamma-(5-phospho-L-glutamyl)-L-glutamate + ADP</text>
        <dbReference type="Rhea" id="RHEA:52632"/>
        <dbReference type="Rhea" id="RHEA-COMP:13311"/>
        <dbReference type="Rhea" id="RHEA-COMP:13313"/>
        <dbReference type="ChEBI" id="CHEBI:30616"/>
        <dbReference type="ChEBI" id="CHEBI:136714"/>
        <dbReference type="ChEBI" id="CHEBI:136717"/>
        <dbReference type="ChEBI" id="CHEBI:456216"/>
        <dbReference type="EC" id="2.7.2.19"/>
    </reaction>
</comment>
<comment type="pathway">
    <text evidence="1">Amino-acid biosynthesis; L-lysine biosynthesis via AAA pathway; L-lysine from L-alpha-aminoadipate (Thermus route): step 2/5.</text>
</comment>
<comment type="pathway">
    <text evidence="1">Amino-acid biosynthesis; L-arginine biosynthesis.</text>
</comment>
<comment type="subcellular location">
    <subcellularLocation>
        <location evidence="1">Cytoplasm</location>
    </subcellularLocation>
</comment>
<comment type="similarity">
    <text evidence="1">Belongs to the acetylglutamate kinase family. LysZ subfamily.</text>
</comment>
<dbReference type="EC" id="2.7.2.17" evidence="1"/>
<dbReference type="EC" id="2.7.2.19" evidence="1"/>
<dbReference type="EMBL" id="DP000238">
    <property type="protein sequence ID" value="ABK77828.1"/>
    <property type="molecule type" value="Genomic_DNA"/>
</dbReference>
<dbReference type="SMR" id="A0RWW1"/>
<dbReference type="STRING" id="414004.CENSYa_1204"/>
<dbReference type="EnsemblBacteria" id="ABK77828">
    <property type="protein sequence ID" value="ABK77828"/>
    <property type="gene ID" value="CENSYa_1204"/>
</dbReference>
<dbReference type="KEGG" id="csy:CENSYa_1204"/>
<dbReference type="PATRIC" id="fig|414004.10.peg.1096"/>
<dbReference type="HOGENOM" id="CLU_053680_2_0_2"/>
<dbReference type="UniPathway" id="UPA00033">
    <property type="reaction ID" value="UER00036"/>
</dbReference>
<dbReference type="UniPathway" id="UPA00068"/>
<dbReference type="Proteomes" id="UP000000758">
    <property type="component" value="Chromosome"/>
</dbReference>
<dbReference type="GO" id="GO:0005737">
    <property type="term" value="C:cytoplasm"/>
    <property type="evidence" value="ECO:0007669"/>
    <property type="project" value="UniProtKB-SubCell"/>
</dbReference>
<dbReference type="GO" id="GO:0003991">
    <property type="term" value="F:acetylglutamate kinase activity"/>
    <property type="evidence" value="ECO:0007669"/>
    <property type="project" value="TreeGrafter"/>
</dbReference>
<dbReference type="GO" id="GO:0005524">
    <property type="term" value="F:ATP binding"/>
    <property type="evidence" value="ECO:0007669"/>
    <property type="project" value="UniProtKB-KW"/>
</dbReference>
<dbReference type="GO" id="GO:0043744">
    <property type="term" value="F:N2-acetyl-L-aminoadipate kinase activity"/>
    <property type="evidence" value="ECO:0007669"/>
    <property type="project" value="RHEA"/>
</dbReference>
<dbReference type="GO" id="GO:0042450">
    <property type="term" value="P:arginine biosynthetic process via ornithine"/>
    <property type="evidence" value="ECO:0007669"/>
    <property type="project" value="UniProtKB-UniRule"/>
</dbReference>
<dbReference type="GO" id="GO:0006526">
    <property type="term" value="P:L-arginine biosynthetic process"/>
    <property type="evidence" value="ECO:0007669"/>
    <property type="project" value="UniProtKB-UniPathway"/>
</dbReference>
<dbReference type="GO" id="GO:0019878">
    <property type="term" value="P:lysine biosynthetic process via aminoadipic acid"/>
    <property type="evidence" value="ECO:0007669"/>
    <property type="project" value="UniProtKB-UniRule"/>
</dbReference>
<dbReference type="Gene3D" id="3.40.1160.10">
    <property type="entry name" value="Acetylglutamate kinase-like"/>
    <property type="match status" value="1"/>
</dbReference>
<dbReference type="HAMAP" id="MF_02082">
    <property type="entry name" value="LysZ"/>
    <property type="match status" value="1"/>
</dbReference>
<dbReference type="InterPro" id="IPR036393">
    <property type="entry name" value="AceGlu_kinase-like_sf"/>
</dbReference>
<dbReference type="InterPro" id="IPR004662">
    <property type="entry name" value="AcgluKinase_fam"/>
</dbReference>
<dbReference type="InterPro" id="IPR001048">
    <property type="entry name" value="Asp/Glu/Uridylate_kinase"/>
</dbReference>
<dbReference type="InterPro" id="IPR037529">
    <property type="entry name" value="LysZ"/>
</dbReference>
<dbReference type="NCBIfam" id="TIGR00761">
    <property type="entry name" value="argB"/>
    <property type="match status" value="1"/>
</dbReference>
<dbReference type="NCBIfam" id="NF010659">
    <property type="entry name" value="PRK14058.1-1"/>
    <property type="match status" value="1"/>
</dbReference>
<dbReference type="NCBIfam" id="NF010662">
    <property type="entry name" value="PRK14058.1-4"/>
    <property type="match status" value="1"/>
</dbReference>
<dbReference type="PANTHER" id="PTHR23342">
    <property type="entry name" value="N-ACETYLGLUTAMATE SYNTHASE"/>
    <property type="match status" value="1"/>
</dbReference>
<dbReference type="PANTHER" id="PTHR23342:SF0">
    <property type="entry name" value="N-ACETYLGLUTAMATE SYNTHASE, MITOCHONDRIAL"/>
    <property type="match status" value="1"/>
</dbReference>
<dbReference type="Pfam" id="PF00696">
    <property type="entry name" value="AA_kinase"/>
    <property type="match status" value="1"/>
</dbReference>
<dbReference type="PIRSF" id="PIRSF000728">
    <property type="entry name" value="NAGK"/>
    <property type="match status" value="1"/>
</dbReference>
<dbReference type="SUPFAM" id="SSF53633">
    <property type="entry name" value="Carbamate kinase-like"/>
    <property type="match status" value="1"/>
</dbReference>
<reference key="1">
    <citation type="journal article" date="2006" name="Proc. Natl. Acad. Sci. U.S.A.">
        <title>Genomic analysis of the uncultivated marine crenarchaeote Cenarchaeum symbiosum.</title>
        <authorList>
            <person name="Hallam S.J."/>
            <person name="Konstantinidis K.T."/>
            <person name="Putnam N."/>
            <person name="Schleper C."/>
            <person name="Watanabe Y."/>
            <person name="Sugahara J."/>
            <person name="Preston C."/>
            <person name="de la Torre J."/>
            <person name="Richardson P.M."/>
            <person name="DeLong E.F."/>
        </authorList>
    </citation>
    <scope>NUCLEOTIDE SEQUENCE [LARGE SCALE GENOMIC DNA]</scope>
    <source>
        <strain>A</strain>
    </source>
</reference>